<dbReference type="EMBL" id="X15257">
    <property type="protein sequence ID" value="CAA33329.1"/>
    <property type="molecule type" value="mRNA"/>
</dbReference>
<dbReference type="EMBL" id="X57270">
    <property type="protein sequence ID" value="CAA40542.1"/>
    <property type="molecule type" value="mRNA"/>
</dbReference>
<dbReference type="EMBL" id="X69793">
    <property type="protein sequence ID" value="CAA49448.1"/>
    <property type="molecule type" value="Genomic_DNA"/>
</dbReference>
<dbReference type="PIR" id="S04126">
    <property type="entry name" value="S04126"/>
</dbReference>
<dbReference type="SMR" id="P20145"/>
<dbReference type="ExpressionAtlas" id="P20145">
    <property type="expression patterns" value="baseline and differential"/>
</dbReference>
<dbReference type="GO" id="GO:0008289">
    <property type="term" value="F:lipid binding"/>
    <property type="evidence" value="ECO:0007669"/>
    <property type="project" value="UniProtKB-KW"/>
</dbReference>
<dbReference type="GO" id="GO:0006869">
    <property type="term" value="P:lipid transport"/>
    <property type="evidence" value="ECO:0007669"/>
    <property type="project" value="InterPro"/>
</dbReference>
<dbReference type="CDD" id="cd01959">
    <property type="entry name" value="nsLTP2"/>
    <property type="match status" value="1"/>
</dbReference>
<dbReference type="Gene3D" id="1.10.110.10">
    <property type="entry name" value="Plant lipid-transfer and hydrophobic proteins"/>
    <property type="match status" value="1"/>
</dbReference>
<dbReference type="InterPro" id="IPR036312">
    <property type="entry name" value="Bifun_inhib/LTP/seed_sf"/>
</dbReference>
<dbReference type="InterPro" id="IPR016140">
    <property type="entry name" value="Bifunc_inhib/LTP/seed_store"/>
</dbReference>
<dbReference type="InterPro" id="IPR033872">
    <property type="entry name" value="nsLTP2"/>
</dbReference>
<dbReference type="PANTHER" id="PTHR33214">
    <property type="entry name" value="BIFUNCTIONAL INHIBITOR/LIPID-TRANSFER PROTEIN/SEED STORAGE 2S ALBUMIN SUPERFAMILY PROTEIN"/>
    <property type="match status" value="1"/>
</dbReference>
<dbReference type="PANTHER" id="PTHR33214:SF75">
    <property type="entry name" value="NON-SPECIFIC LIPID-TRANSFER PROTEIN 2P"/>
    <property type="match status" value="1"/>
</dbReference>
<dbReference type="Pfam" id="PF00234">
    <property type="entry name" value="Tryp_alpha_amyl"/>
    <property type="match status" value="1"/>
</dbReference>
<dbReference type="SMART" id="SM00499">
    <property type="entry name" value="AAI"/>
    <property type="match status" value="1"/>
</dbReference>
<dbReference type="SUPFAM" id="SSF47699">
    <property type="entry name" value="Bifunctional inhibitor/lipid-transfer protein/seed storage 2S albumin"/>
    <property type="match status" value="1"/>
</dbReference>
<accession>P20145</accession>
<name>NLTP2_HORVU</name>
<feature type="signal peptide" evidence="1">
    <location>
        <begin position="1"/>
        <end position="35"/>
    </location>
</feature>
<feature type="chain" id="PRO_0000018418" description="Probable non-specific lipid-transfer protein">
    <location>
        <begin position="36"/>
        <end position="102"/>
    </location>
</feature>
<feature type="disulfide bond" evidence="1">
    <location>
        <begin position="37"/>
        <end position="71"/>
    </location>
</feature>
<feature type="disulfide bond" evidence="1">
    <location>
        <begin position="45"/>
        <end position="59"/>
    </location>
</feature>
<feature type="disulfide bond" evidence="1">
    <location>
        <begin position="60"/>
        <end position="95"/>
    </location>
</feature>
<feature type="disulfide bond" evidence="1">
    <location>
        <begin position="69"/>
        <end position="102"/>
    </location>
</feature>
<evidence type="ECO:0000250" key="1"/>
<evidence type="ECO:0000305" key="2"/>
<protein>
    <recommendedName>
        <fullName>Probable non-specific lipid-transfer protein</fullName>
        <shortName>LTP</shortName>
    </recommendedName>
    <alternativeName>
        <fullName>Aleurone-specific 10 kDa protein</fullName>
    </alternativeName>
    <alternativeName>
        <fullName>B-FABP</fullName>
    </alternativeName>
</protein>
<reference key="1">
    <citation type="journal article" date="1989" name="Plant Mol. Biol.">
        <title>Barley aleurone cell development: molecular cloning of aleurone-specific cDNAs from immature grains.</title>
        <authorList>
            <person name="Jakobsen K."/>
            <person name="Klemsdal S.S."/>
            <person name="Aalen R.B."/>
            <person name="Bosnes M."/>
            <person name="Alexander D."/>
            <person name="Olsen O.-A."/>
        </authorList>
    </citation>
    <scope>NUCLEOTIDE SEQUENCE</scope>
    <source>
        <strain>cv. Bomi</strain>
    </source>
</reference>
<reference key="2">
    <citation type="journal article" date="1994" name="Plant J.">
        <title>The promoter of the barley aleurone-specific gene encoding a putative 7 kDa lipid transfer protein confers aleurone cell-specific expression in transgenic rice.</title>
        <authorList>
            <person name="Kalla R."/>
            <person name="Shimamoto K."/>
            <person name="Potter R."/>
            <person name="Nielsen P."/>
            <person name="Linnestad C."/>
            <person name="Olsen O.-A."/>
        </authorList>
    </citation>
    <scope>NUCLEOTIDE SEQUENCE [GENOMIC DNA]</scope>
    <source>
        <strain>cv. Bomi</strain>
    </source>
</reference>
<reference key="3">
    <citation type="submission" date="1992-12" db="EMBL/GenBank/DDBJ databases">
        <authorList>
            <person name="Kalla R."/>
            <person name="Potter R."/>
            <person name="Nielsen P.S."/>
            <person name="Linnestad C."/>
            <person name="Gabrielsen O.S."/>
            <person name="Olsen O.-A."/>
        </authorList>
    </citation>
    <scope>NUCLEOTIDE SEQUENCE</scope>
    <source>
        <strain>cv. Bomi</strain>
        <tissue>Leaf</tissue>
    </source>
</reference>
<sequence length="102" mass="10357">MAMAMGMAMRKEAAVAVMMVMVVTLAAGADAGAGAACEPAQLAVCASAILGGTKPSGECCGNLRAQQGCLCQYVKDPNYGHYVSSPHARDTLNLCGIPVPHC</sequence>
<organism>
    <name type="scientific">Hordeum vulgare</name>
    <name type="common">Barley</name>
    <dbReference type="NCBI Taxonomy" id="4513"/>
    <lineage>
        <taxon>Eukaryota</taxon>
        <taxon>Viridiplantae</taxon>
        <taxon>Streptophyta</taxon>
        <taxon>Embryophyta</taxon>
        <taxon>Tracheophyta</taxon>
        <taxon>Spermatophyta</taxon>
        <taxon>Magnoliopsida</taxon>
        <taxon>Liliopsida</taxon>
        <taxon>Poales</taxon>
        <taxon>Poaceae</taxon>
        <taxon>BOP clade</taxon>
        <taxon>Pooideae</taxon>
        <taxon>Triticodae</taxon>
        <taxon>Triticeae</taxon>
        <taxon>Hordeinae</taxon>
        <taxon>Hordeum</taxon>
    </lineage>
</organism>
<comment type="function">
    <text>Potential phospholipid transfer protein.</text>
</comment>
<comment type="tissue specificity">
    <text>Aleurone.</text>
</comment>
<comment type="developmental stage">
    <text>Maximum mRNA abundance around mid-phase of grain development.</text>
</comment>
<comment type="similarity">
    <text evidence="2">Belongs to the plant LTP family. B11E subfamily.</text>
</comment>
<gene>
    <name type="primary">LTP2</name>
    <name type="synonym">B11E</name>
    <name type="synonym">LTP</name>
</gene>
<proteinExistence type="evidence at transcript level"/>
<keyword id="KW-1015">Disulfide bond</keyword>
<keyword id="KW-0446">Lipid-binding</keyword>
<keyword id="KW-0732">Signal</keyword>
<keyword id="KW-0813">Transport</keyword>